<accession>Q57T26</accession>
<organism>
    <name type="scientific">Salmonella choleraesuis (strain SC-B67)</name>
    <dbReference type="NCBI Taxonomy" id="321314"/>
    <lineage>
        <taxon>Bacteria</taxon>
        <taxon>Pseudomonadati</taxon>
        <taxon>Pseudomonadota</taxon>
        <taxon>Gammaproteobacteria</taxon>
        <taxon>Enterobacterales</taxon>
        <taxon>Enterobacteriaceae</taxon>
        <taxon>Salmonella</taxon>
    </lineage>
</organism>
<evidence type="ECO:0000255" key="1">
    <source>
        <dbReference type="HAMAP-Rule" id="MF_00392"/>
    </source>
</evidence>
<reference key="1">
    <citation type="journal article" date="2005" name="Nucleic Acids Res.">
        <title>The genome sequence of Salmonella enterica serovar Choleraesuis, a highly invasive and resistant zoonotic pathogen.</title>
        <authorList>
            <person name="Chiu C.-H."/>
            <person name="Tang P."/>
            <person name="Chu C."/>
            <person name="Hu S."/>
            <person name="Bao Q."/>
            <person name="Yu J."/>
            <person name="Chou Y.-Y."/>
            <person name="Wang H.-S."/>
            <person name="Lee Y.-S."/>
        </authorList>
    </citation>
    <scope>NUCLEOTIDE SEQUENCE [LARGE SCALE GENOMIC DNA]</scope>
    <source>
        <strain>SC-B67</strain>
    </source>
</reference>
<feature type="chain" id="PRO_0000255221" description="Lipid-A-disaccharide synthase">
    <location>
        <begin position="1"/>
        <end position="382"/>
    </location>
</feature>
<name>LPXB_SALCH</name>
<sequence length="382" mass="42452">MAAQRPLTIALVAGETSGDILGAGLIRALKARVPNARFVGVAGPRMQAEGCEAWYEMEELAVMGIVEVLGRLRRLLHIRADLTRRFTELKPDVFVGIDAPDFNITLEGNLKKQGIKTIHYVSPSVWAWRQKRVFKIGRSTHMVLAFLPFEKAFYDKFNVPCRFIGHTMADAMPLDPDKNAARDVLGIPHDAHCLALLPGSRGAEVEMLSADFLKTAQLLRQRYPDLEVVVPLVNAKRREQFEKIKAEVAPDLAVHLLDGMAREAMIASDAALLASGTAALECMLAKCPMVVGYRMKPFTFWLAKRLVKTEYVSLPNLLAGRELVKELLQEECEPQKLAEALLPLLANGKTSHAMHDTFRELHQQIRCNADEQAADAVLELAQ</sequence>
<protein>
    <recommendedName>
        <fullName evidence="1">Lipid-A-disaccharide synthase</fullName>
        <ecNumber evidence="1">2.4.1.182</ecNumber>
    </recommendedName>
</protein>
<keyword id="KW-0328">Glycosyltransferase</keyword>
<keyword id="KW-0441">Lipid A biosynthesis</keyword>
<keyword id="KW-0444">Lipid biosynthesis</keyword>
<keyword id="KW-0443">Lipid metabolism</keyword>
<keyword id="KW-0808">Transferase</keyword>
<gene>
    <name evidence="1" type="primary">lpxB</name>
    <name type="ordered locus">SCH_0229</name>
</gene>
<dbReference type="EC" id="2.4.1.182" evidence="1"/>
<dbReference type="EMBL" id="AE017220">
    <property type="protein sequence ID" value="AAX64135.1"/>
    <property type="molecule type" value="Genomic_DNA"/>
</dbReference>
<dbReference type="RefSeq" id="WP_000741216.1">
    <property type="nucleotide sequence ID" value="NC_006905.1"/>
</dbReference>
<dbReference type="SMR" id="Q57T26"/>
<dbReference type="CAZy" id="GT19">
    <property type="family name" value="Glycosyltransferase Family 19"/>
</dbReference>
<dbReference type="KEGG" id="sec:SCH_0229"/>
<dbReference type="HOGENOM" id="CLU_036577_3_0_6"/>
<dbReference type="UniPathway" id="UPA00359">
    <property type="reaction ID" value="UER00481"/>
</dbReference>
<dbReference type="Proteomes" id="UP000000538">
    <property type="component" value="Chromosome"/>
</dbReference>
<dbReference type="GO" id="GO:0016020">
    <property type="term" value="C:membrane"/>
    <property type="evidence" value="ECO:0007669"/>
    <property type="project" value="GOC"/>
</dbReference>
<dbReference type="GO" id="GO:0008915">
    <property type="term" value="F:lipid-A-disaccharide synthase activity"/>
    <property type="evidence" value="ECO:0007669"/>
    <property type="project" value="UniProtKB-UniRule"/>
</dbReference>
<dbReference type="GO" id="GO:0005543">
    <property type="term" value="F:phospholipid binding"/>
    <property type="evidence" value="ECO:0007669"/>
    <property type="project" value="TreeGrafter"/>
</dbReference>
<dbReference type="GO" id="GO:0009245">
    <property type="term" value="P:lipid A biosynthetic process"/>
    <property type="evidence" value="ECO:0007669"/>
    <property type="project" value="UniProtKB-UniRule"/>
</dbReference>
<dbReference type="CDD" id="cd01635">
    <property type="entry name" value="Glycosyltransferase_GTB-type"/>
    <property type="match status" value="1"/>
</dbReference>
<dbReference type="HAMAP" id="MF_00392">
    <property type="entry name" value="LpxB"/>
    <property type="match status" value="1"/>
</dbReference>
<dbReference type="InterPro" id="IPR003835">
    <property type="entry name" value="Glyco_trans_19"/>
</dbReference>
<dbReference type="NCBIfam" id="TIGR00215">
    <property type="entry name" value="lpxB"/>
    <property type="match status" value="1"/>
</dbReference>
<dbReference type="PANTHER" id="PTHR30372">
    <property type="entry name" value="LIPID-A-DISACCHARIDE SYNTHASE"/>
    <property type="match status" value="1"/>
</dbReference>
<dbReference type="PANTHER" id="PTHR30372:SF4">
    <property type="entry name" value="LIPID-A-DISACCHARIDE SYNTHASE, MITOCHONDRIAL-RELATED"/>
    <property type="match status" value="1"/>
</dbReference>
<dbReference type="Pfam" id="PF02684">
    <property type="entry name" value="LpxB"/>
    <property type="match status" value="1"/>
</dbReference>
<dbReference type="SUPFAM" id="SSF53756">
    <property type="entry name" value="UDP-Glycosyltransferase/glycogen phosphorylase"/>
    <property type="match status" value="1"/>
</dbReference>
<proteinExistence type="inferred from homology"/>
<comment type="function">
    <text evidence="1">Condensation of UDP-2,3-diacylglucosamine and 2,3-diacylglucosamine-1-phosphate to form lipid A disaccharide, a precursor of lipid A, a phosphorylated glycolipid that anchors the lipopolysaccharide to the outer membrane of the cell.</text>
</comment>
<comment type="catalytic activity">
    <reaction evidence="1">
        <text>2-N,3-O-bis[(3R)-3-hydroxytetradecanoyl]-alpha-D-glucosaminyl 1-phosphate + UDP-2-N,3-O-bis[(3R)-3-hydroxytetradecanoyl]-alpha-D-glucosamine = lipid A disaccharide (E. coli) + UDP + H(+)</text>
        <dbReference type="Rhea" id="RHEA:22668"/>
        <dbReference type="ChEBI" id="CHEBI:15378"/>
        <dbReference type="ChEBI" id="CHEBI:57957"/>
        <dbReference type="ChEBI" id="CHEBI:58223"/>
        <dbReference type="ChEBI" id="CHEBI:58466"/>
        <dbReference type="ChEBI" id="CHEBI:78847"/>
    </reaction>
</comment>
<comment type="catalytic activity">
    <reaction evidence="1">
        <text>a lipid X + a UDP-2-N,3-O-bis[(3R)-3-hydroxyacyl]-alpha-D-glucosamine = a lipid A disaccharide + UDP + H(+)</text>
        <dbReference type="Rhea" id="RHEA:67828"/>
        <dbReference type="ChEBI" id="CHEBI:15378"/>
        <dbReference type="ChEBI" id="CHEBI:58223"/>
        <dbReference type="ChEBI" id="CHEBI:137748"/>
        <dbReference type="ChEBI" id="CHEBI:176338"/>
        <dbReference type="ChEBI" id="CHEBI:176343"/>
        <dbReference type="EC" id="2.4.1.182"/>
    </reaction>
</comment>
<comment type="pathway">
    <text evidence="1">Glycolipid biosynthesis; lipid IV(A) biosynthesis; lipid IV(A) from (3R)-3-hydroxytetradecanoyl-[acyl-carrier-protein] and UDP-N-acetyl-alpha-D-glucosamine: step 5/6.</text>
</comment>
<comment type="similarity">
    <text evidence="1">Belongs to the LpxB family.</text>
</comment>